<protein>
    <recommendedName>
        <fullName>Integrin beta-4</fullName>
    </recommendedName>
    <cdAntigenName>CD104</cdAntigenName>
</protein>
<evidence type="ECO:0000250" key="1"/>
<evidence type="ECO:0000250" key="2">
    <source>
        <dbReference type="UniProtKB" id="P05106"/>
    </source>
</evidence>
<evidence type="ECO:0000250" key="3">
    <source>
        <dbReference type="UniProtKB" id="P16144"/>
    </source>
</evidence>
<evidence type="ECO:0000250" key="4">
    <source>
        <dbReference type="UniProtKB" id="Q64632"/>
    </source>
</evidence>
<evidence type="ECO:0000255" key="5"/>
<evidence type="ECO:0000255" key="6">
    <source>
        <dbReference type="PROSITE-ProRule" id="PRU00316"/>
    </source>
</evidence>
<evidence type="ECO:0000255" key="7">
    <source>
        <dbReference type="PROSITE-ProRule" id="PRU01392"/>
    </source>
</evidence>
<evidence type="ECO:0000256" key="8">
    <source>
        <dbReference type="SAM" id="MobiDB-lite"/>
    </source>
</evidence>
<evidence type="ECO:0000303" key="9">
    <source>
    </source>
</evidence>
<evidence type="ECO:0000303" key="10">
    <source>
    </source>
</evidence>
<evidence type="ECO:0000305" key="11"/>
<evidence type="ECO:0007744" key="12">
    <source>
    </source>
</evidence>
<accession>A2A863</accession>
<accession>A2A865</accession>
<accession>A2A866</accession>
<accession>Q6PCS0</accession>
<accession>Q8R3J1</accession>
<accession>Q91W15</accession>
<feature type="signal peptide" evidence="1">
    <location>
        <begin position="1"/>
        <end position="28"/>
    </location>
</feature>
<feature type="chain" id="PRO_0000379078" description="Integrin beta-4">
    <location>
        <begin position="29"/>
        <end position="1818"/>
    </location>
</feature>
<feature type="topological domain" description="Extracellular" evidence="5">
    <location>
        <begin position="29"/>
        <end position="712"/>
    </location>
</feature>
<feature type="transmembrane region" description="Helical" evidence="5">
    <location>
        <begin position="713"/>
        <end position="733"/>
    </location>
</feature>
<feature type="topological domain" description="Cytoplasmic" evidence="5">
    <location>
        <begin position="734"/>
        <end position="1818"/>
    </location>
</feature>
<feature type="domain" description="PSI" evidence="5">
    <location>
        <begin position="30"/>
        <end position="74"/>
    </location>
</feature>
<feature type="domain" description="VWFA" evidence="2">
    <location>
        <begin position="132"/>
        <end position="310"/>
    </location>
</feature>
<feature type="domain" description="I-EGF 1" evidence="7">
    <location>
        <begin position="459"/>
        <end position="493"/>
    </location>
</feature>
<feature type="domain" description="I-EGF 2" evidence="7">
    <location>
        <begin position="494"/>
        <end position="539"/>
    </location>
</feature>
<feature type="domain" description="I-EGF 3" evidence="7">
    <location>
        <begin position="540"/>
        <end position="576"/>
    </location>
</feature>
<feature type="domain" description="I-EGF 4" evidence="7">
    <location>
        <begin position="577"/>
        <end position="617"/>
    </location>
</feature>
<feature type="domain" description="Calx-beta">
    <location>
        <begin position="981"/>
        <end position="1086"/>
    </location>
</feature>
<feature type="domain" description="Fibronectin type-III 1" evidence="6">
    <location>
        <begin position="1131"/>
        <end position="1220"/>
    </location>
</feature>
<feature type="domain" description="Fibronectin type-III 2" evidence="6">
    <location>
        <begin position="1224"/>
        <end position="1323"/>
    </location>
</feature>
<feature type="domain" description="Fibronectin type-III 3" evidence="6">
    <location>
        <begin position="1526"/>
        <end position="1621"/>
    </location>
</feature>
<feature type="domain" description="Fibronectin type-III 4" evidence="6">
    <location>
        <begin position="1639"/>
        <end position="1735"/>
    </location>
</feature>
<feature type="region of interest" description="Involved in NRG1- and IGF1-binding" evidence="3">
    <location>
        <begin position="195"/>
        <end position="200"/>
    </location>
</feature>
<feature type="region of interest" description="Palmitoylated on several cysteines" evidence="1">
    <location>
        <begin position="734"/>
        <end position="751"/>
    </location>
</feature>
<feature type="region of interest" description="Disordered" evidence="8">
    <location>
        <begin position="1115"/>
        <end position="1137"/>
    </location>
</feature>
<feature type="region of interest" description="Disordered" evidence="8">
    <location>
        <begin position="1402"/>
        <end position="1433"/>
    </location>
</feature>
<feature type="short sequence motif" description="Cell attachment site" evidence="5">
    <location>
        <begin position="473"/>
        <end position="475"/>
    </location>
</feature>
<feature type="short sequence motif" description="Cell attachment site" evidence="5">
    <location>
        <begin position="1005"/>
        <end position="1007"/>
    </location>
</feature>
<feature type="compositionally biased region" description="Gly residues" evidence="8">
    <location>
        <begin position="1415"/>
        <end position="1426"/>
    </location>
</feature>
<feature type="binding site" description="in MIDAS binding site" evidence="2">
    <location>
        <position position="140"/>
    </location>
    <ligand>
        <name>Mg(2+)</name>
        <dbReference type="ChEBI" id="CHEBI:18420"/>
    </ligand>
</feature>
<feature type="binding site" description="in ADMIDAS binding site" evidence="2">
    <location>
        <position position="142"/>
    </location>
    <ligand>
        <name>Ca(2+)</name>
        <dbReference type="ChEBI" id="CHEBI:29108"/>
        <label>1</label>
    </ligand>
</feature>
<feature type="binding site" description="in MIDAS binding site" evidence="2">
    <location>
        <position position="142"/>
    </location>
    <ligand>
        <name>Mg(2+)</name>
        <dbReference type="ChEBI" id="CHEBI:18420"/>
    </ligand>
</feature>
<feature type="binding site" description="in ADMIDAS binding site" evidence="2">
    <location>
        <position position="145"/>
    </location>
    <ligand>
        <name>Ca(2+)</name>
        <dbReference type="ChEBI" id="CHEBI:29108"/>
        <label>1</label>
    </ligand>
</feature>
<feature type="binding site" description="in ADMIDAS binding site" evidence="2">
    <location>
        <position position="146"/>
    </location>
    <ligand>
        <name>Ca(2+)</name>
        <dbReference type="ChEBI" id="CHEBI:29108"/>
        <label>1</label>
    </ligand>
</feature>
<feature type="binding site" description="in LIMBS binding site" evidence="2">
    <location>
        <position position="177"/>
    </location>
    <ligand>
        <name>Ca(2+)</name>
        <dbReference type="ChEBI" id="CHEBI:29108"/>
        <label>2</label>
    </ligand>
</feature>
<feature type="binding site" description="in LIMBS binding site" evidence="2">
    <location>
        <position position="229"/>
    </location>
    <ligand>
        <name>Ca(2+)</name>
        <dbReference type="ChEBI" id="CHEBI:29108"/>
        <label>2</label>
    </ligand>
</feature>
<feature type="binding site" description="in LIMBS binding site" evidence="2">
    <location>
        <position position="231"/>
    </location>
    <ligand>
        <name>Ca(2+)</name>
        <dbReference type="ChEBI" id="CHEBI:29108"/>
        <label>2</label>
    </ligand>
</feature>
<feature type="binding site" description="in LIMBS binding site" evidence="2">
    <location>
        <position position="233"/>
    </location>
    <ligand>
        <name>Ca(2+)</name>
        <dbReference type="ChEBI" id="CHEBI:29108"/>
        <label>2</label>
    </ligand>
</feature>
<feature type="binding site" description="in LIMBS binding site" evidence="2">
    <location>
        <position position="234"/>
    </location>
    <ligand>
        <name>Ca(2+)</name>
        <dbReference type="ChEBI" id="CHEBI:29108"/>
        <label>2</label>
    </ligand>
</feature>
<feature type="binding site" description="in MIDAS binding site" evidence="2">
    <location>
        <position position="234"/>
    </location>
    <ligand>
        <name>Mg(2+)</name>
        <dbReference type="ChEBI" id="CHEBI:18420"/>
    </ligand>
</feature>
<feature type="binding site" description="in ADMIDAS binding site" evidence="2">
    <location>
        <position position="351"/>
    </location>
    <ligand>
        <name>Ca(2+)</name>
        <dbReference type="ChEBI" id="CHEBI:29108"/>
        <label>1</label>
    </ligand>
</feature>
<feature type="modified residue" description="Phosphoserine" evidence="4">
    <location>
        <position position="773"/>
    </location>
</feature>
<feature type="modified residue" description="Phosphoserine" evidence="12">
    <location>
        <position position="1071"/>
    </location>
</feature>
<feature type="modified residue" description="Phosphoserine" evidence="4">
    <location>
        <position position="1121"/>
    </location>
</feature>
<feature type="modified residue" description="Phosphoserine" evidence="3">
    <location>
        <position position="1451"/>
    </location>
</feature>
<feature type="modified residue" description="Phosphoserine" evidence="3">
    <location>
        <position position="1454"/>
    </location>
</feature>
<feature type="modified residue" description="Phosphoserine" evidence="12">
    <location>
        <position position="1470"/>
    </location>
</feature>
<feature type="modified residue" description="Phosphothreonine" evidence="3">
    <location>
        <position position="1483"/>
    </location>
</feature>
<feature type="modified residue" description="Phosphoserine" evidence="4">
    <location>
        <position position="1490"/>
    </location>
</feature>
<feature type="modified residue" description="Phosphothreonine" evidence="3">
    <location>
        <position position="1526"/>
    </location>
</feature>
<feature type="modified residue" description="Phosphoserine" evidence="4">
    <location>
        <position position="1787"/>
    </location>
</feature>
<feature type="glycosylation site" description="N-linked (GlcNAc...) asparagine" evidence="5">
    <location>
        <position position="328"/>
    </location>
</feature>
<feature type="glycosylation site" description="N-linked (GlcNAc...) asparagine" evidence="5">
    <location>
        <position position="493"/>
    </location>
</feature>
<feature type="glycosylation site" description="N-linked (GlcNAc...) asparagine" evidence="5">
    <location>
        <position position="581"/>
    </location>
</feature>
<feature type="glycosylation site" description="N-linked (GlcNAc...) asparagine" evidence="5">
    <location>
        <position position="619"/>
    </location>
</feature>
<feature type="glycosylation site" description="N-linked (GlcNAc...) asparagine" evidence="5">
    <location>
        <position position="697"/>
    </location>
</feature>
<feature type="disulfide bond" evidence="2">
    <location>
        <begin position="31"/>
        <end position="49"/>
    </location>
</feature>
<feature type="disulfide bond" evidence="2">
    <location>
        <begin position="39"/>
        <end position="457"/>
    </location>
</feature>
<feature type="disulfide bond" evidence="2">
    <location>
        <begin position="42"/>
        <end position="62"/>
    </location>
</feature>
<feature type="disulfide bond" evidence="2">
    <location>
        <begin position="52"/>
        <end position="73"/>
    </location>
</feature>
<feature type="disulfide bond" evidence="2">
    <location>
        <begin position="246"/>
        <end position="289"/>
    </location>
</feature>
<feature type="disulfide bond" evidence="7">
    <location>
        <begin position="459"/>
        <end position="478"/>
    </location>
</feature>
<feature type="disulfide bond" evidence="7">
    <location>
        <begin position="470"/>
        <end position="481"/>
    </location>
</feature>
<feature type="disulfide bond" evidence="7">
    <location>
        <begin position="483"/>
        <end position="492"/>
    </location>
</feature>
<feature type="disulfide bond" evidence="7">
    <location>
        <begin position="494"/>
        <end position="522"/>
    </location>
</feature>
<feature type="disulfide bond" evidence="7">
    <location>
        <begin position="505"/>
        <end position="520"/>
    </location>
</feature>
<feature type="disulfide bond" evidence="7">
    <location>
        <begin position="514"/>
        <end position="525"/>
    </location>
</feature>
<feature type="disulfide bond" evidence="7">
    <location>
        <begin position="527"/>
        <end position="538"/>
    </location>
</feature>
<feature type="disulfide bond" evidence="7">
    <location>
        <begin position="545"/>
        <end position="559"/>
    </location>
</feature>
<feature type="disulfide bond" evidence="7">
    <location>
        <begin position="553"/>
        <end position="564"/>
    </location>
</feature>
<feature type="disulfide bond" evidence="7">
    <location>
        <begin position="566"/>
        <end position="575"/>
    </location>
</feature>
<feature type="disulfide bond" evidence="7">
    <location>
        <begin position="577"/>
        <end position="600"/>
    </location>
</feature>
<feature type="disulfide bond" evidence="7">
    <location>
        <begin position="584"/>
        <end position="598"/>
    </location>
</feature>
<feature type="disulfide bond" evidence="7">
    <location>
        <begin position="592"/>
        <end position="603"/>
    </location>
</feature>
<feature type="disulfide bond" evidence="7">
    <location>
        <begin position="605"/>
        <end position="616"/>
    </location>
</feature>
<feature type="disulfide bond" evidence="2">
    <location>
        <begin position="628"/>
        <end position="673"/>
    </location>
</feature>
<feature type="disulfide bond" evidence="2">
    <location>
        <begin position="634"/>
        <end position="653"/>
    </location>
</feature>
<feature type="disulfide bond" evidence="2">
    <location>
        <begin position="637"/>
        <end position="650"/>
    </location>
</feature>
<feature type="disulfide bond" evidence="2">
    <location>
        <begin position="682"/>
        <end position="708"/>
    </location>
</feature>
<feature type="splice variant" id="VSP_037636" description="In isoform 2 and isoform 3." evidence="9 10">
    <location>
        <begin position="1372"/>
        <end position="1436"/>
    </location>
</feature>
<feature type="splice variant" id="VSP_037637" description="In isoform 3." evidence="11">
    <original>Q</original>
    <variation>QGLPPIWEDGRSRLPLSWTLGSLSRAHMKGVPASRGSPDSIILAGQSAAPSWGT</variation>
    <location>
        <position position="1515"/>
    </location>
</feature>
<feature type="sequence conflict" description="In Ref. 1." evidence="11" ref="1">
    <original>A</original>
    <variation>R</variation>
    <location>
        <position position="17"/>
    </location>
</feature>
<feature type="sequence conflict" description="In Ref. 1." evidence="11" ref="1">
    <original>EL</original>
    <variation>DV</variation>
    <location>
        <begin position="67"/>
        <end position="68"/>
    </location>
</feature>
<feature type="sequence conflict" description="In Ref. 1." evidence="11" ref="1">
    <original>D</original>
    <variation>V</variation>
    <location>
        <position position="94"/>
    </location>
</feature>
<feature type="sequence conflict" description="In Ref. 1." evidence="11" ref="1">
    <original>P</original>
    <variation>R</variation>
    <location>
        <position position="113"/>
    </location>
</feature>
<feature type="sequence conflict" description="In Ref. 1." evidence="11" ref="1">
    <original>S</original>
    <variation>T</variation>
    <location>
        <position position="118"/>
    </location>
</feature>
<feature type="sequence conflict" description="In Ref. 1." evidence="11" ref="1">
    <location>
        <position position="624"/>
    </location>
</feature>
<feature type="sequence conflict" description="In Ref. 1." evidence="11" ref="1">
    <location>
        <position position="666"/>
    </location>
</feature>
<feature type="sequence conflict" description="In Ref. 1." evidence="11" ref="1">
    <original>PPGSF</original>
    <variation>LPAPS</variation>
    <location>
        <begin position="709"/>
        <end position="713"/>
    </location>
</feature>
<feature type="sequence conflict" description="In Ref. 3; AAH59192." evidence="11" ref="3">
    <original>E</original>
    <variation>K</variation>
    <location>
        <position position="851"/>
    </location>
</feature>
<feature type="sequence conflict" description="In Ref. 1 and 3; AAH06632/AAH59192." evidence="11" ref="1 3">
    <original>T</original>
    <variation>A</variation>
    <location>
        <position position="877"/>
    </location>
</feature>
<feature type="sequence conflict" description="In Ref. 1." evidence="11" ref="1">
    <original>G</original>
    <variation>S</variation>
    <location>
        <position position="972"/>
    </location>
</feature>
<feature type="sequence conflict" description="In Ref. 1." evidence="11" ref="1">
    <location>
        <begin position="1105"/>
        <end position="1107"/>
    </location>
</feature>
<feature type="sequence conflict" description="In Ref. 1." evidence="11" ref="1">
    <original>Q</original>
    <variation>K</variation>
    <location>
        <position position="1204"/>
    </location>
</feature>
<feature type="sequence conflict" description="In Ref. 1." evidence="11" ref="1">
    <original>E</original>
    <variation>D</variation>
    <location>
        <position position="1292"/>
    </location>
</feature>
<feature type="sequence conflict" description="In Ref. 1." evidence="11" ref="1">
    <original>P</original>
    <variation>R</variation>
    <location>
        <position position="1537"/>
    </location>
</feature>
<feature type="sequence conflict" description="In Ref. 1 and 3; AAH06632/AAH25194/AAH59192." evidence="11" ref="1 3">
    <original>M</original>
    <variation>T</variation>
    <location>
        <position position="1552"/>
    </location>
</feature>
<feature type="sequence conflict" description="In Ref. 1." evidence="11" ref="1">
    <original>NGG</original>
    <variation>TCV</variation>
    <location>
        <begin position="1564"/>
        <end position="1566"/>
    </location>
</feature>
<feature type="sequence conflict" description="In Ref. 1." evidence="11" ref="1">
    <original>HSY</original>
    <variation>YSH</variation>
    <location>
        <begin position="1590"/>
        <end position="1592"/>
    </location>
</feature>
<feature type="sequence conflict" description="In Ref. 1." evidence="11" ref="1">
    <original>L</original>
    <variation>P</variation>
    <location>
        <position position="1653"/>
    </location>
</feature>
<feature type="sequence conflict" description="In Ref. 1." evidence="11" ref="1">
    <original>RP</original>
    <variation>SR</variation>
    <location>
        <begin position="1662"/>
        <end position="1663"/>
    </location>
</feature>
<feature type="sequence conflict" description="In Ref. 1." evidence="11" ref="1">
    <original>H</original>
    <variation>N</variation>
    <location>
        <position position="1744"/>
    </location>
</feature>
<feature type="sequence conflict" description="In Ref. 3; AAH25194." evidence="11" ref="3">
    <original>V</original>
    <variation>M</variation>
    <location>
        <position position="1759"/>
    </location>
</feature>
<comment type="function">
    <text evidence="3">Integrin alpha-6/beta-4 is a receptor for laminin. It plays a critical structural role in the hemidesmosome of epithelial cells. Is required for the regulation of keratinocyte polarity and motility. ITGA6:ITGB4 binds to NRG1 (via EGF domain) and this binding is essential for NRG1-ERBB signaling. ITGA6:ITGB4 binds to IGF1 and this binding is essential for IGF1 signaling. ITGA6:ITGB4 binds to IGF2 and this binding is essential for IGF2 signaling.</text>
</comment>
<comment type="subunit">
    <text evidence="3">Heterodimer of an alpha and a beta subunit. Beta-4 associates with alpha-6. Interacts (via cytoplasmic region) with COL17A1 (via cytoplasmic region). Interacts (via cytoplasmic region) with DST isoform 3 (via N-terminus). Interacts (via cytoplasmic domain) with DST (via N-terminus). Interacts with RAC1. ITGA6:ITGB4 is found in a ternary complex with NRG1 and ERBB3. ITGA6:ITGB4 is found in a ternary complex with IGF1 and IGF1R. ITGA6:ITGB4 interacts with IGF2 (By similarity). Interacts with TMEM268; this interaction prevents ITGB4 degradation (By similarity).</text>
</comment>
<comment type="subcellular location">
    <subcellularLocation>
        <location evidence="1">Cell membrane</location>
        <topology evidence="1">Single-pass type I membrane protein</topology>
    </subcellularLocation>
    <subcellularLocation>
        <location evidence="1">Cell membrane</location>
        <topology evidence="1">Lipid-anchor</topology>
    </subcellularLocation>
    <subcellularLocation>
        <location evidence="1">Cell junction</location>
        <location evidence="1">Hemidesmosome</location>
    </subcellularLocation>
    <text evidence="1">Colocalizes with DST at the leading edge of migrating keratinocytes.</text>
</comment>
<comment type="alternative products">
    <event type="alternative splicing"/>
    <isoform>
        <id>A2A863-1</id>
        <name>1</name>
        <sequence type="displayed"/>
    </isoform>
    <isoform>
        <id>A2A863-2</id>
        <name>2</name>
        <sequence type="described" ref="VSP_037636"/>
    </isoform>
    <isoform>
        <id>A2A863-3</id>
        <name>3</name>
        <sequence type="described" ref="VSP_037636 VSP_037637"/>
    </isoform>
</comment>
<comment type="domain">
    <text evidence="1">The fibronectin type-III-like domains bind BPAG1 and plectin and probably also recruit BP230.</text>
</comment>
<comment type="domain">
    <text evidence="2">The VWFA domain (or beta I domain) contains three cation-binding sites: the ligand-associated metal ion-binding site (LIMBS or SyMBS), the metal ion-dependent adhesion site (MIDAS), and the adjacent MIDAS site (ADMIDAS). This domain is also part of the ligand-binding site.</text>
</comment>
<comment type="PTM">
    <text evidence="3">Palmitoylated by DHHC3 at several cysteines of the membrane-proximal region, enhancing stability and cell surface expression. Palmitoylation also promotes secondary association with tertaspanins (By similarity).</text>
</comment>
<comment type="similarity">
    <text evidence="11">Belongs to the integrin beta chain family.</text>
</comment>
<keyword id="KW-0025">Alternative splicing</keyword>
<keyword id="KW-0106">Calcium</keyword>
<keyword id="KW-0130">Cell adhesion</keyword>
<keyword id="KW-0965">Cell junction</keyword>
<keyword id="KW-1003">Cell membrane</keyword>
<keyword id="KW-1015">Disulfide bond</keyword>
<keyword id="KW-0245">EGF-like domain</keyword>
<keyword id="KW-0325">Glycoprotein</keyword>
<keyword id="KW-0401">Integrin</keyword>
<keyword id="KW-0449">Lipoprotein</keyword>
<keyword id="KW-0460">Magnesium</keyword>
<keyword id="KW-0472">Membrane</keyword>
<keyword id="KW-0479">Metal-binding</keyword>
<keyword id="KW-0564">Palmitate</keyword>
<keyword id="KW-0597">Phosphoprotein</keyword>
<keyword id="KW-0675">Receptor</keyword>
<keyword id="KW-1185">Reference proteome</keyword>
<keyword id="KW-0677">Repeat</keyword>
<keyword id="KW-0732">Signal</keyword>
<keyword id="KW-0812">Transmembrane</keyword>
<keyword id="KW-1133">Transmembrane helix</keyword>
<organism>
    <name type="scientific">Mus musculus</name>
    <name type="common">Mouse</name>
    <dbReference type="NCBI Taxonomy" id="10090"/>
    <lineage>
        <taxon>Eukaryota</taxon>
        <taxon>Metazoa</taxon>
        <taxon>Chordata</taxon>
        <taxon>Craniata</taxon>
        <taxon>Vertebrata</taxon>
        <taxon>Euteleostomi</taxon>
        <taxon>Mammalia</taxon>
        <taxon>Eutheria</taxon>
        <taxon>Euarchontoglires</taxon>
        <taxon>Glires</taxon>
        <taxon>Rodentia</taxon>
        <taxon>Myomorpha</taxon>
        <taxon>Muroidea</taxon>
        <taxon>Muridae</taxon>
        <taxon>Murinae</taxon>
        <taxon>Mus</taxon>
        <taxon>Mus</taxon>
    </lineage>
</organism>
<gene>
    <name type="primary">Itgb4</name>
</gene>
<reference key="1">
    <citation type="journal article" date="1993" name="Gene">
        <title>Sequence of a cDNA encoding the beta 4 subunit of murine integrin.</title>
        <authorList>
            <person name="Kennel S.J."/>
            <person name="Foote L.J."/>
            <person name="Cimino L."/>
            <person name="Rizzo M.G."/>
            <person name="Chang L.Y."/>
            <person name="Sacchi A."/>
        </authorList>
    </citation>
    <scope>NUCLEOTIDE SEQUENCE [MRNA] (ISOFORM 2)</scope>
</reference>
<reference key="2">
    <citation type="journal article" date="2009" name="PLoS Biol.">
        <title>Lineage-specific biology revealed by a finished genome assembly of the mouse.</title>
        <authorList>
            <person name="Church D.M."/>
            <person name="Goodstadt L."/>
            <person name="Hillier L.W."/>
            <person name="Zody M.C."/>
            <person name="Goldstein S."/>
            <person name="She X."/>
            <person name="Bult C.J."/>
            <person name="Agarwala R."/>
            <person name="Cherry J.L."/>
            <person name="DiCuccio M."/>
            <person name="Hlavina W."/>
            <person name="Kapustin Y."/>
            <person name="Meric P."/>
            <person name="Maglott D."/>
            <person name="Birtle Z."/>
            <person name="Marques A.C."/>
            <person name="Graves T."/>
            <person name="Zhou S."/>
            <person name="Teague B."/>
            <person name="Potamousis K."/>
            <person name="Churas C."/>
            <person name="Place M."/>
            <person name="Herschleb J."/>
            <person name="Runnheim R."/>
            <person name="Forrest D."/>
            <person name="Amos-Landgraf J."/>
            <person name="Schwartz D.C."/>
            <person name="Cheng Z."/>
            <person name="Lindblad-Toh K."/>
            <person name="Eichler E.E."/>
            <person name="Ponting C.P."/>
        </authorList>
    </citation>
    <scope>NUCLEOTIDE SEQUENCE [LARGE SCALE GENOMIC DNA]</scope>
    <source>
        <strain>C57BL/6J</strain>
    </source>
</reference>
<reference key="3">
    <citation type="journal article" date="2004" name="Genome Res.">
        <title>The status, quality, and expansion of the NIH full-length cDNA project: the Mammalian Gene Collection (MGC).</title>
        <authorList>
            <consortium name="The MGC Project Team"/>
        </authorList>
    </citation>
    <scope>NUCLEOTIDE SEQUENCE [LARGE SCALE MRNA] OF 124-1818 (ISOFORM 2)</scope>
    <source>
        <strain>Czech II</strain>
        <strain>FVB/N</strain>
        <tissue>Mammary tumor</tissue>
    </source>
</reference>
<reference key="4">
    <citation type="journal article" date="2010" name="Cell">
        <title>A tissue-specific atlas of mouse protein phosphorylation and expression.</title>
        <authorList>
            <person name="Huttlin E.L."/>
            <person name="Jedrychowski M.P."/>
            <person name="Elias J.E."/>
            <person name="Goswami T."/>
            <person name="Rad R."/>
            <person name="Beausoleil S.A."/>
            <person name="Villen J."/>
            <person name="Haas W."/>
            <person name="Sowa M.E."/>
            <person name="Gygi S.P."/>
        </authorList>
    </citation>
    <scope>PHOSPHORYLATION [LARGE SCALE ANALYSIS] AT SER-1071 AND SER-1470</scope>
    <scope>IDENTIFICATION BY MASS SPECTROMETRY [LARGE SCALE ANALYSIS]</scope>
    <source>
        <tissue>Kidney</tissue>
        <tissue>Lung</tissue>
        <tissue>Pancreas</tissue>
    </source>
</reference>
<proteinExistence type="evidence at protein level"/>
<name>ITB4_MOUSE</name>
<dbReference type="EMBL" id="AL607108">
    <property type="status" value="NOT_ANNOTATED_CDS"/>
    <property type="molecule type" value="Genomic_DNA"/>
</dbReference>
<dbReference type="EMBL" id="AL645647">
    <property type="status" value="NOT_ANNOTATED_CDS"/>
    <property type="molecule type" value="Genomic_DNA"/>
</dbReference>
<dbReference type="EMBL" id="BC006632">
    <property type="protein sequence ID" value="AAH06632.1"/>
    <property type="molecule type" value="mRNA"/>
</dbReference>
<dbReference type="EMBL" id="BC025194">
    <property type="protein sequence ID" value="AAH25194.1"/>
    <property type="molecule type" value="mRNA"/>
</dbReference>
<dbReference type="EMBL" id="BC059192">
    <property type="protein sequence ID" value="AAH59192.1"/>
    <property type="molecule type" value="mRNA"/>
</dbReference>
<dbReference type="PIR" id="JN0786">
    <property type="entry name" value="JN0786"/>
</dbReference>
<dbReference type="RefSeq" id="NP_001392055.1">
    <molecule id="A2A863-2"/>
    <property type="nucleotide sequence ID" value="NM_001405126.1"/>
</dbReference>
<dbReference type="RefSeq" id="XP_006532635.1">
    <molecule id="A2A863-1"/>
    <property type="nucleotide sequence ID" value="XM_006532572.5"/>
</dbReference>
<dbReference type="RefSeq" id="XP_006532636.1">
    <molecule id="A2A863-3"/>
    <property type="nucleotide sequence ID" value="XM_006532573.5"/>
</dbReference>
<dbReference type="RefSeq" id="XP_006532637.1">
    <property type="nucleotide sequence ID" value="XM_006532574.2"/>
</dbReference>
<dbReference type="SMR" id="A2A863"/>
<dbReference type="BioGRID" id="228715">
    <property type="interactions" value="11"/>
</dbReference>
<dbReference type="ComplexPortal" id="CPX-3120">
    <property type="entry name" value="integrin alpha6-beta4 complex"/>
</dbReference>
<dbReference type="FunCoup" id="A2A863">
    <property type="interactions" value="464"/>
</dbReference>
<dbReference type="IntAct" id="A2A863">
    <property type="interactions" value="2"/>
</dbReference>
<dbReference type="STRING" id="10090.ENSMUSP00000127604"/>
<dbReference type="GlyCosmos" id="A2A863">
    <property type="glycosylation" value="5 sites, No reported glycans"/>
</dbReference>
<dbReference type="GlyGen" id="A2A863">
    <property type="glycosylation" value="6 sites, 1 N-linked glycan (1 site), 1 O-linked glycan (1 site)"/>
</dbReference>
<dbReference type="iPTMnet" id="A2A863"/>
<dbReference type="PhosphoSitePlus" id="A2A863"/>
<dbReference type="jPOST" id="A2A863"/>
<dbReference type="PaxDb" id="10090-ENSMUSP00000102068"/>
<dbReference type="PeptideAtlas" id="A2A863"/>
<dbReference type="ProteomicsDB" id="301690">
    <molecule id="A2A863-1"/>
</dbReference>
<dbReference type="ProteomicsDB" id="301691">
    <molecule id="A2A863-2"/>
</dbReference>
<dbReference type="ProteomicsDB" id="301692">
    <molecule id="A2A863-3"/>
</dbReference>
<dbReference type="Antibodypedia" id="3934">
    <property type="antibodies" value="1066 antibodies from 46 providers"/>
</dbReference>
<dbReference type="DNASU" id="192897"/>
<dbReference type="Ensembl" id="ENSMUST00000068981.13">
    <molecule id="A2A863-2"/>
    <property type="protein sequence ID" value="ENSMUSP00000070811.7"/>
    <property type="gene ID" value="ENSMUSG00000020758.16"/>
</dbReference>
<dbReference type="Ensembl" id="ENSMUST00000106458.2">
    <molecule id="A2A863-1"/>
    <property type="protein sequence ID" value="ENSMUSP00000102066.2"/>
    <property type="gene ID" value="ENSMUSG00000020758.16"/>
</dbReference>
<dbReference type="Ensembl" id="ENSMUST00000106460.9">
    <molecule id="A2A863-3"/>
    <property type="protein sequence ID" value="ENSMUSP00000102068.3"/>
    <property type="gene ID" value="ENSMUSG00000020758.16"/>
</dbReference>
<dbReference type="Ensembl" id="ENSMUST00000106461.8">
    <molecule id="A2A863-1"/>
    <property type="protein sequence ID" value="ENSMUSP00000102069.2"/>
    <property type="gene ID" value="ENSMUSG00000020758.16"/>
</dbReference>
<dbReference type="GeneID" id="192897"/>
<dbReference type="UCSC" id="uc007mji.1">
    <molecule id="A2A863-2"/>
    <property type="organism name" value="mouse"/>
</dbReference>
<dbReference type="AGR" id="MGI:96613"/>
<dbReference type="CTD" id="3691"/>
<dbReference type="MGI" id="MGI:96613">
    <property type="gene designation" value="Itgb4"/>
</dbReference>
<dbReference type="VEuPathDB" id="HostDB:ENSMUSG00000020758"/>
<dbReference type="eggNOG" id="KOG1226">
    <property type="taxonomic scope" value="Eukaryota"/>
</dbReference>
<dbReference type="GeneTree" id="ENSGT01130000278313"/>
<dbReference type="HOGENOM" id="CLU_237558_0_0_1"/>
<dbReference type="InParanoid" id="A2A863"/>
<dbReference type="OrthoDB" id="410592at2759"/>
<dbReference type="PhylomeDB" id="A2A863"/>
<dbReference type="TreeFam" id="TF105392"/>
<dbReference type="Reactome" id="R-MMU-3000157">
    <property type="pathway name" value="Laminin interactions"/>
</dbReference>
<dbReference type="Reactome" id="R-MMU-3000170">
    <property type="pathway name" value="Syndecan interactions"/>
</dbReference>
<dbReference type="Reactome" id="R-MMU-446107">
    <property type="pathway name" value="Type I hemidesmosome assembly"/>
</dbReference>
<dbReference type="BioGRID-ORCS" id="192897">
    <property type="hits" value="2 hits in 63 CRISPR screens"/>
</dbReference>
<dbReference type="ChiTaRS" id="Itgb4">
    <property type="organism name" value="mouse"/>
</dbReference>
<dbReference type="PRO" id="PR:A2A863"/>
<dbReference type="Proteomes" id="UP000000589">
    <property type="component" value="Chromosome 11"/>
</dbReference>
<dbReference type="RNAct" id="A2A863">
    <property type="molecule type" value="protein"/>
</dbReference>
<dbReference type="Bgee" id="ENSMUSG00000020758">
    <property type="expression patterns" value="Expressed in substantia propria of cornea and 130 other cell types or tissues"/>
</dbReference>
<dbReference type="ExpressionAtlas" id="A2A863">
    <property type="expression patterns" value="baseline and differential"/>
</dbReference>
<dbReference type="GO" id="GO:0009925">
    <property type="term" value="C:basal plasma membrane"/>
    <property type="evidence" value="ECO:0000314"/>
    <property type="project" value="MGI"/>
</dbReference>
<dbReference type="GO" id="GO:0005604">
    <property type="term" value="C:basement membrane"/>
    <property type="evidence" value="ECO:0000314"/>
    <property type="project" value="MGI"/>
</dbReference>
<dbReference type="GO" id="GO:0031252">
    <property type="term" value="C:cell leading edge"/>
    <property type="evidence" value="ECO:0000250"/>
    <property type="project" value="UniProtKB"/>
</dbReference>
<dbReference type="GO" id="GO:0009986">
    <property type="term" value="C:cell surface"/>
    <property type="evidence" value="ECO:0000314"/>
    <property type="project" value="MGI"/>
</dbReference>
<dbReference type="GO" id="GO:0030056">
    <property type="term" value="C:hemidesmosome"/>
    <property type="evidence" value="ECO:0000314"/>
    <property type="project" value="MGI"/>
</dbReference>
<dbReference type="GO" id="GO:0008305">
    <property type="term" value="C:integrin complex"/>
    <property type="evidence" value="ECO:0000314"/>
    <property type="project" value="MGI"/>
</dbReference>
<dbReference type="GO" id="GO:0031965">
    <property type="term" value="C:nuclear membrane"/>
    <property type="evidence" value="ECO:0007669"/>
    <property type="project" value="Ensembl"/>
</dbReference>
<dbReference type="GO" id="GO:0005730">
    <property type="term" value="C:nucleolus"/>
    <property type="evidence" value="ECO:0007669"/>
    <property type="project" value="Ensembl"/>
</dbReference>
<dbReference type="GO" id="GO:0043235">
    <property type="term" value="C:receptor complex"/>
    <property type="evidence" value="ECO:0000266"/>
    <property type="project" value="MGI"/>
</dbReference>
<dbReference type="GO" id="GO:0001664">
    <property type="term" value="F:G protein-coupled receptor binding"/>
    <property type="evidence" value="ECO:0007669"/>
    <property type="project" value="Ensembl"/>
</dbReference>
<dbReference type="GO" id="GO:0031994">
    <property type="term" value="F:insulin-like growth factor I binding"/>
    <property type="evidence" value="ECO:0007669"/>
    <property type="project" value="Ensembl"/>
</dbReference>
<dbReference type="GO" id="GO:0046872">
    <property type="term" value="F:metal ion binding"/>
    <property type="evidence" value="ECO:0007669"/>
    <property type="project" value="UniProtKB-KW"/>
</dbReference>
<dbReference type="GO" id="GO:0038132">
    <property type="term" value="F:neuregulin binding"/>
    <property type="evidence" value="ECO:0007669"/>
    <property type="project" value="Ensembl"/>
</dbReference>
<dbReference type="GO" id="GO:0006914">
    <property type="term" value="P:autophagy"/>
    <property type="evidence" value="ECO:0007669"/>
    <property type="project" value="Ensembl"/>
</dbReference>
<dbReference type="GO" id="GO:0007155">
    <property type="term" value="P:cell adhesion"/>
    <property type="evidence" value="ECO:0000315"/>
    <property type="project" value="MGI"/>
</dbReference>
<dbReference type="GO" id="GO:0048870">
    <property type="term" value="P:cell motility"/>
    <property type="evidence" value="ECO:0000250"/>
    <property type="project" value="UniProtKB"/>
</dbReference>
<dbReference type="GO" id="GO:0007160">
    <property type="term" value="P:cell-matrix adhesion"/>
    <property type="evidence" value="ECO:0007669"/>
    <property type="project" value="Ensembl"/>
</dbReference>
<dbReference type="GO" id="GO:0046847">
    <property type="term" value="P:filopodium assembly"/>
    <property type="evidence" value="ECO:0000315"/>
    <property type="project" value="MGI"/>
</dbReference>
<dbReference type="GO" id="GO:0031581">
    <property type="term" value="P:hemidesmosome assembly"/>
    <property type="evidence" value="ECO:0007669"/>
    <property type="project" value="Ensembl"/>
</dbReference>
<dbReference type="GO" id="GO:0007229">
    <property type="term" value="P:integrin-mediated signaling pathway"/>
    <property type="evidence" value="ECO:0007669"/>
    <property type="project" value="UniProtKB-KW"/>
</dbReference>
<dbReference type="GO" id="GO:0048333">
    <property type="term" value="P:mesodermal cell differentiation"/>
    <property type="evidence" value="ECO:0007669"/>
    <property type="project" value="Ensembl"/>
</dbReference>
<dbReference type="GO" id="GO:0022011">
    <property type="term" value="P:myelination in peripheral nervous system"/>
    <property type="evidence" value="ECO:0000316"/>
    <property type="project" value="MGI"/>
</dbReference>
<dbReference type="GO" id="GO:0035878">
    <property type="term" value="P:nail development"/>
    <property type="evidence" value="ECO:0007669"/>
    <property type="project" value="Ensembl"/>
</dbReference>
<dbReference type="GO" id="GO:0032290">
    <property type="term" value="P:peripheral nervous system myelin formation"/>
    <property type="evidence" value="ECO:0000316"/>
    <property type="project" value="MGI"/>
</dbReference>
<dbReference type="GO" id="GO:0009611">
    <property type="term" value="P:response to wounding"/>
    <property type="evidence" value="ECO:0000250"/>
    <property type="project" value="UniProtKB"/>
</dbReference>
<dbReference type="GO" id="GO:0043589">
    <property type="term" value="P:skin morphogenesis"/>
    <property type="evidence" value="ECO:0007669"/>
    <property type="project" value="Ensembl"/>
</dbReference>
<dbReference type="GO" id="GO:0061450">
    <property type="term" value="P:trophoblast cell migration"/>
    <property type="evidence" value="ECO:0000315"/>
    <property type="project" value="MGI"/>
</dbReference>
<dbReference type="CDD" id="cd00063">
    <property type="entry name" value="FN3"/>
    <property type="match status" value="4"/>
</dbReference>
<dbReference type="FunFam" id="2.10.25.10:FF:000212">
    <property type="entry name" value="Integrin beta"/>
    <property type="match status" value="1"/>
</dbReference>
<dbReference type="FunFam" id="2.10.25.10:FF:000215">
    <property type="entry name" value="Integrin beta"/>
    <property type="match status" value="1"/>
</dbReference>
<dbReference type="FunFam" id="2.10.25.10:FF:000287">
    <property type="entry name" value="Integrin beta"/>
    <property type="match status" value="1"/>
</dbReference>
<dbReference type="FunFam" id="2.60.40.10:FF:000146">
    <property type="entry name" value="Integrin beta"/>
    <property type="match status" value="2"/>
</dbReference>
<dbReference type="FunFam" id="2.60.40.10:FF:000424">
    <property type="entry name" value="Integrin beta"/>
    <property type="match status" value="1"/>
</dbReference>
<dbReference type="FunFam" id="2.60.40.10:FF:000452">
    <property type="entry name" value="Integrin beta"/>
    <property type="match status" value="1"/>
</dbReference>
<dbReference type="FunFam" id="2.60.40.1510:FF:000006">
    <property type="entry name" value="Integrin beta"/>
    <property type="match status" value="1"/>
</dbReference>
<dbReference type="FunFam" id="2.60.40.2030:FF:000004">
    <property type="entry name" value="Integrin beta"/>
    <property type="match status" value="1"/>
</dbReference>
<dbReference type="FunFam" id="3.30.1680.10:FF:000002">
    <property type="entry name" value="Integrin beta"/>
    <property type="match status" value="1"/>
</dbReference>
<dbReference type="FunFam" id="3.40.50.410:FF:000036">
    <property type="entry name" value="Integrin beta"/>
    <property type="match status" value="1"/>
</dbReference>
<dbReference type="FunFam" id="4.10.1240.30:FF:000003">
    <property type="entry name" value="Integrin beta"/>
    <property type="match status" value="1"/>
</dbReference>
<dbReference type="Gene3D" id="2.60.40.2030">
    <property type="match status" value="1"/>
</dbReference>
<dbReference type="Gene3D" id="4.10.1240.30">
    <property type="match status" value="1"/>
</dbReference>
<dbReference type="Gene3D" id="2.60.40.10">
    <property type="entry name" value="Immunoglobulins"/>
    <property type="match status" value="4"/>
</dbReference>
<dbReference type="Gene3D" id="2.10.25.10">
    <property type="entry name" value="Laminin"/>
    <property type="match status" value="3"/>
</dbReference>
<dbReference type="Gene3D" id="3.30.1680.10">
    <property type="entry name" value="ligand-binding face of the semaphorins, domain 2"/>
    <property type="match status" value="1"/>
</dbReference>
<dbReference type="Gene3D" id="2.60.40.1510">
    <property type="entry name" value="ntegrin, alpha v. Chain A, domain 3"/>
    <property type="match status" value="1"/>
</dbReference>
<dbReference type="Gene3D" id="3.40.50.410">
    <property type="entry name" value="von Willebrand factor, type A domain"/>
    <property type="match status" value="1"/>
</dbReference>
<dbReference type="InterPro" id="IPR038081">
    <property type="entry name" value="CalX-like_sf"/>
</dbReference>
<dbReference type="InterPro" id="IPR003644">
    <property type="entry name" value="Calx_beta"/>
</dbReference>
<dbReference type="InterPro" id="IPR000742">
    <property type="entry name" value="EGF-like_dom"/>
</dbReference>
<dbReference type="InterPro" id="IPR003961">
    <property type="entry name" value="FN3_dom"/>
</dbReference>
<dbReference type="InterPro" id="IPR036116">
    <property type="entry name" value="FN3_sf"/>
</dbReference>
<dbReference type="InterPro" id="IPR040622">
    <property type="entry name" value="I-EGF_1"/>
</dbReference>
<dbReference type="InterPro" id="IPR013783">
    <property type="entry name" value="Ig-like_fold"/>
</dbReference>
<dbReference type="InterPro" id="IPR033760">
    <property type="entry name" value="Integrin_beta_N"/>
</dbReference>
<dbReference type="InterPro" id="IPR015812">
    <property type="entry name" value="Integrin_bsu"/>
</dbReference>
<dbReference type="InterPro" id="IPR012013">
    <property type="entry name" value="Integrin_bsu-4"/>
</dbReference>
<dbReference type="InterPro" id="IPR012896">
    <property type="entry name" value="Integrin_bsu_tail"/>
</dbReference>
<dbReference type="InterPro" id="IPR036349">
    <property type="entry name" value="Integrin_bsu_tail_dom_sf"/>
</dbReference>
<dbReference type="InterPro" id="IPR002369">
    <property type="entry name" value="Integrin_bsu_VWA"/>
</dbReference>
<dbReference type="InterPro" id="IPR036465">
    <property type="entry name" value="vWFA_dom_sf"/>
</dbReference>
<dbReference type="PANTHER" id="PTHR10082">
    <property type="entry name" value="INTEGRIN BETA SUBUNIT"/>
    <property type="match status" value="1"/>
</dbReference>
<dbReference type="PANTHER" id="PTHR10082:SF42">
    <property type="entry name" value="INTEGRIN BETA-4"/>
    <property type="match status" value="1"/>
</dbReference>
<dbReference type="Pfam" id="PF03160">
    <property type="entry name" value="Calx-beta"/>
    <property type="match status" value="1"/>
</dbReference>
<dbReference type="Pfam" id="PF23106">
    <property type="entry name" value="EGF_Teneurin"/>
    <property type="match status" value="1"/>
</dbReference>
<dbReference type="Pfam" id="PF00041">
    <property type="entry name" value="fn3"/>
    <property type="match status" value="4"/>
</dbReference>
<dbReference type="Pfam" id="PF18372">
    <property type="entry name" value="I-EGF_1"/>
    <property type="match status" value="1"/>
</dbReference>
<dbReference type="Pfam" id="PF07965">
    <property type="entry name" value="Integrin_B_tail"/>
    <property type="match status" value="1"/>
</dbReference>
<dbReference type="Pfam" id="PF00362">
    <property type="entry name" value="Integrin_beta"/>
    <property type="match status" value="1"/>
</dbReference>
<dbReference type="Pfam" id="PF17205">
    <property type="entry name" value="PSI_integrin"/>
    <property type="match status" value="1"/>
</dbReference>
<dbReference type="PIRSF" id="PIRSF002513">
    <property type="entry name" value="Integrin_B4"/>
    <property type="match status" value="1"/>
</dbReference>
<dbReference type="PRINTS" id="PR01186">
    <property type="entry name" value="INTEGRINB"/>
</dbReference>
<dbReference type="SMART" id="SM00237">
    <property type="entry name" value="Calx_beta"/>
    <property type="match status" value="1"/>
</dbReference>
<dbReference type="SMART" id="SM00060">
    <property type="entry name" value="FN3"/>
    <property type="match status" value="4"/>
</dbReference>
<dbReference type="SMART" id="SM00187">
    <property type="entry name" value="INB"/>
    <property type="match status" value="1"/>
</dbReference>
<dbReference type="SMART" id="SM01242">
    <property type="entry name" value="Integrin_B_tail"/>
    <property type="match status" value="1"/>
</dbReference>
<dbReference type="SUPFAM" id="SSF141072">
    <property type="entry name" value="CalX-like"/>
    <property type="match status" value="1"/>
</dbReference>
<dbReference type="SUPFAM" id="SSF57196">
    <property type="entry name" value="EGF/Laminin"/>
    <property type="match status" value="2"/>
</dbReference>
<dbReference type="SUPFAM" id="SSF49265">
    <property type="entry name" value="Fibronectin type III"/>
    <property type="match status" value="2"/>
</dbReference>
<dbReference type="SUPFAM" id="SSF69687">
    <property type="entry name" value="Integrin beta tail domain"/>
    <property type="match status" value="1"/>
</dbReference>
<dbReference type="SUPFAM" id="SSF103575">
    <property type="entry name" value="Plexin repeat"/>
    <property type="match status" value="1"/>
</dbReference>
<dbReference type="SUPFAM" id="SSF53300">
    <property type="entry name" value="vWA-like"/>
    <property type="match status" value="1"/>
</dbReference>
<dbReference type="PROSITE" id="PS00022">
    <property type="entry name" value="EGF_1"/>
    <property type="match status" value="2"/>
</dbReference>
<dbReference type="PROSITE" id="PS01186">
    <property type="entry name" value="EGF_2"/>
    <property type="match status" value="2"/>
</dbReference>
<dbReference type="PROSITE" id="PS50853">
    <property type="entry name" value="FN3"/>
    <property type="match status" value="4"/>
</dbReference>
<dbReference type="PROSITE" id="PS00243">
    <property type="entry name" value="I_EGF_1"/>
    <property type="match status" value="2"/>
</dbReference>
<dbReference type="PROSITE" id="PS52047">
    <property type="entry name" value="I_EGF_2"/>
    <property type="match status" value="4"/>
</dbReference>
<sequence length="1818" mass="201650">MAGPCCSPWVKLLLLAAMLSASLPGDLANRCKKAQVKSCTECIRVDKSCAYCTDELFKERRCNTQAELLAAGCRGESILVMESSLEITENTQIDTSLHRSQVSPQGLQVRLRPGEERSFVFQVFEPLESPVDLYILMDFSNSMSDDLDNLKQMGQNLAKILRQLTSDYTIGFGKFVDKVSVPQTDMRPEKLKEPWPNSDPPFSFKNVISLTENVEEFWNKLQGERISGNLDAPEGGFDAILQTAVCTRDIGWRADSTHLLVFSTESAFHYEADGANVLAGIMNRNDEKCHLDASGAYTQYKTQDYPSVPTLVRLLAKHNIIPIFAVTNYSYSYYEKLHKYFPVSSLGVLQEDSSNIVELLEEAFYRIRSNLDIRALDSPRGLRTEVTSDTLQKTETGSFHIKRGEVGTYNVHLRAVEDIDGTHVCQLAKEDQGGNIHLKPSFSDGLRMDASVICDVCPCELQKEVRSARCHFRGDFMCGHCVCNEGWSGKTCNCSTGSLSDTQPCLREGEDKPCSGHGECQCGRCVCYGEGRYEGHFCEYDNFQCPRTSGFLCNDRGRCSMGECVCEPGWTGRSCDCPLSNATCIDSNGGICNGRGYCECGRCHCNQQSLYTDTTCEINYSAIRLGLCEDLRSCVQCQAWGTGEKKGRACDDCPFKVKMVDELKKAEEVVEYCSFRDEDDDCTYSYNVEGDGSPGPNSTVLVHKKKDCPPGSFWWLIPLLIFLLLLLALLLLLCWKYCACCKACLGLLPCCNRGHMVGFKEDHYMLRENLMASDHLDTPMLRSGNLKGRDTVRWKITNNVQRPGFATHAASTSPTELVPYGLSLRLGRLCTENLMKPGTRECDQLRQEVEENLNEVYRQVSGAHKLQQTKFRQQPNTGKKQDHTIVDTVLLAPRSAKQMLLKLTEKQVEQGSFHELKVAPGYYTVTAEQDARGMVEFQEGVELVDVRVPLFIRPEDDDEKQLLVEAIDVPVGTATLGRRLVNITIIKEQASGVVSFEQPEYSVSRGDQVARIPVIRHILDNGKSQVSYSTQDNTAHGHRDYVPVEGELLFHPGETWKELQVKLLELQEVDSLLRGRQVRRFQVQLSNPKFGARLGQPSTTTVILGEHDETDRSLINQTLSSPPPPHGDLGAPQNPNAKAAGSRKIHFNWLPPPGKPMGYRVKYWIQGDSESEAHLLDSKVPSVELTNLYPYCDYEMKVCAYGAQGEGPYSSLVSCRTHQEVPSEPGRLAFNVVSSTVTQLSWAEPAETNGEITAYEVCYGLVNEDNRPIGPMKKVLVDNPKNRMLLIENLRESQPYRYTVKARNGAGWGPEREAIINLATQPKRPMSIPIIPDIPIVDAQGGEDYENFLMYSDDVLRSPASSQRPSVSDDTGCGWKFEPLLGEELDLRRVTWRLPPELIPRLSASSGRSDEDGSVAGGVEGEGSGWIRGATPRPPGEHLVNGRMDFAYPGSANSLHRMTAANVAYGTHLSPHLSHRVLSTSSTLTRDYHSLTRTEHSHSGTLPRDYSTLTSLSSQDSRGAVGVPDTPTRLVFSALGPTSLKVSWQEPQCDRMLLGYSVEYQLLNGGEMHRLNIPNPGQTSVVVEDLLPNHSYVFRVRAQSQEGWGREREGVITIESQVHPQSPLCPLPGSAFTLSTPSAPGPLVFTALSPDSLQLSWERPRRPNGDILGYLVTCEMAQGGAPARTFRVDGDNPESRLTVPGLSENVPYKFKVQARTTEGFGPEREGIITIESQVGGPFPQLGSHSGLFQNPVQSEFSSVTSTHSTTTEPFLMDGLTLGTQRLEAGGSLTRHVTQEFVTRTLTASGSLSTHMDQQFFQT</sequence>